<gene>
    <name evidence="15" type="primary">ACAA1</name>
    <name type="synonym">ACAA</name>
    <name type="synonym">PTHIO</name>
</gene>
<dbReference type="EC" id="2.3.1.16" evidence="14"/>
<dbReference type="EC" id="2.3.1.155" evidence="14"/>
<dbReference type="EC" id="2.3.1.9" evidence="2"/>
<dbReference type="EMBL" id="X12966">
    <property type="protein sequence ID" value="CAA31412.1"/>
    <property type="molecule type" value="mRNA"/>
</dbReference>
<dbReference type="EMBL" id="X14813">
    <property type="protein sequence ID" value="CAA32918.1"/>
    <property type="molecule type" value="mRNA"/>
</dbReference>
<dbReference type="EMBL" id="X65140">
    <property type="protein sequence ID" value="CAA46270.1"/>
    <property type="molecule type" value="Genomic_DNA"/>
</dbReference>
<dbReference type="EMBL" id="X65148">
    <property type="protein sequence ID" value="CAA46271.1"/>
    <property type="molecule type" value="Genomic_DNA"/>
</dbReference>
<dbReference type="EMBL" id="AP006309">
    <property type="status" value="NOT_ANNOTATED_CDS"/>
    <property type="molecule type" value="Genomic_DNA"/>
</dbReference>
<dbReference type="EMBL" id="CH471055">
    <property type="protein sequence ID" value="EAW64516.1"/>
    <property type="molecule type" value="Genomic_DNA"/>
</dbReference>
<dbReference type="EMBL" id="BC000635">
    <property type="protein sequence ID" value="AAH00635.1"/>
    <property type="molecule type" value="mRNA"/>
</dbReference>
<dbReference type="EMBL" id="BC011977">
    <property type="protein sequence ID" value="AAH11977.1"/>
    <property type="molecule type" value="mRNA"/>
</dbReference>
<dbReference type="EMBL" id="BC014474">
    <property type="protein sequence ID" value="AAH14474.1"/>
    <property type="molecule type" value="mRNA"/>
</dbReference>
<dbReference type="CCDS" id="CCDS2673.1">
    <molecule id="P09110-1"/>
</dbReference>
<dbReference type="CCDS" id="CCDS46794.1">
    <molecule id="P09110-2"/>
</dbReference>
<dbReference type="PIR" id="S17515">
    <property type="entry name" value="XUHUAB"/>
</dbReference>
<dbReference type="RefSeq" id="NP_001123882.1">
    <molecule id="P09110-2"/>
    <property type="nucleotide sequence ID" value="NM_001130410.2"/>
</dbReference>
<dbReference type="RefSeq" id="NP_001598.1">
    <molecule id="P09110-1"/>
    <property type="nucleotide sequence ID" value="NM_001607.4"/>
</dbReference>
<dbReference type="PDB" id="2IIK">
    <property type="method" value="X-ray"/>
    <property type="resolution" value="2.55 A"/>
    <property type="chains" value="A/B=30-423"/>
</dbReference>
<dbReference type="PDBsum" id="2IIK"/>
<dbReference type="SMR" id="P09110"/>
<dbReference type="BioGRID" id="106548">
    <property type="interactions" value="92"/>
</dbReference>
<dbReference type="FunCoup" id="P09110">
    <property type="interactions" value="958"/>
</dbReference>
<dbReference type="IntAct" id="P09110">
    <property type="interactions" value="38"/>
</dbReference>
<dbReference type="MINT" id="P09110"/>
<dbReference type="STRING" id="9606.ENSP00000333664"/>
<dbReference type="CarbonylDB" id="P09110"/>
<dbReference type="GlyGen" id="P09110">
    <property type="glycosylation" value="1 site, 1 N-linked glycan (1 site)"/>
</dbReference>
<dbReference type="iPTMnet" id="P09110"/>
<dbReference type="MetOSite" id="P09110"/>
<dbReference type="PhosphoSitePlus" id="P09110"/>
<dbReference type="SwissPalm" id="P09110"/>
<dbReference type="BioMuta" id="ACAA1"/>
<dbReference type="DMDM" id="135751"/>
<dbReference type="REPRODUCTION-2DPAGE" id="IPI00012828"/>
<dbReference type="jPOST" id="P09110"/>
<dbReference type="MassIVE" id="P09110"/>
<dbReference type="PaxDb" id="9606-ENSP00000333664"/>
<dbReference type="PeptideAtlas" id="P09110"/>
<dbReference type="ProteomicsDB" id="33816"/>
<dbReference type="ProteomicsDB" id="52200">
    <molecule id="P09110-1"/>
</dbReference>
<dbReference type="Pumba" id="P09110"/>
<dbReference type="Antibodypedia" id="1631">
    <property type="antibodies" value="329 antibodies from 33 providers"/>
</dbReference>
<dbReference type="DNASU" id="30"/>
<dbReference type="Ensembl" id="ENST00000301810.11">
    <molecule id="P09110-2"/>
    <property type="protein sequence ID" value="ENSP00000301810.7"/>
    <property type="gene ID" value="ENSG00000060971.19"/>
</dbReference>
<dbReference type="Ensembl" id="ENST00000333167.13">
    <molecule id="P09110-1"/>
    <property type="protein sequence ID" value="ENSP00000333664.8"/>
    <property type="gene ID" value="ENSG00000060971.19"/>
</dbReference>
<dbReference type="GeneID" id="30"/>
<dbReference type="KEGG" id="hsa:30"/>
<dbReference type="MANE-Select" id="ENST00000333167.13">
    <property type="protein sequence ID" value="ENSP00000333664.8"/>
    <property type="RefSeq nucleotide sequence ID" value="NM_001607.4"/>
    <property type="RefSeq protein sequence ID" value="NP_001598.1"/>
</dbReference>
<dbReference type="UCSC" id="uc003cht.4">
    <molecule id="P09110-1"/>
    <property type="organism name" value="human"/>
</dbReference>
<dbReference type="AGR" id="HGNC:82"/>
<dbReference type="CTD" id="30"/>
<dbReference type="DisGeNET" id="30"/>
<dbReference type="GeneCards" id="ACAA1"/>
<dbReference type="HGNC" id="HGNC:82">
    <property type="gene designation" value="ACAA1"/>
</dbReference>
<dbReference type="HPA" id="ENSG00000060971">
    <property type="expression patterns" value="Group enriched (kidney, liver)"/>
</dbReference>
<dbReference type="MalaCards" id="ACAA1"/>
<dbReference type="MIM" id="604054">
    <property type="type" value="gene"/>
</dbReference>
<dbReference type="neXtProt" id="NX_P09110"/>
<dbReference type="OpenTargets" id="ENSG00000060971"/>
<dbReference type="PharmGKB" id="PA24419"/>
<dbReference type="VEuPathDB" id="HostDB:ENSG00000060971"/>
<dbReference type="eggNOG" id="KOG1389">
    <property type="taxonomic scope" value="Eukaryota"/>
</dbReference>
<dbReference type="GeneTree" id="ENSGT01030000234626"/>
<dbReference type="InParanoid" id="P09110"/>
<dbReference type="OMA" id="QMGMDHL"/>
<dbReference type="OrthoDB" id="5404651at2759"/>
<dbReference type="PAN-GO" id="P09110">
    <property type="GO annotations" value="4 GO annotations based on evolutionary models"/>
</dbReference>
<dbReference type="PhylomeDB" id="P09110"/>
<dbReference type="TreeFam" id="TF332308"/>
<dbReference type="BioCyc" id="MetaCyc:HS00752-MONOMER"/>
<dbReference type="PathwayCommons" id="P09110"/>
<dbReference type="Reactome" id="R-HSA-2046106">
    <property type="pathway name" value="alpha-linolenic acid (ALA) metabolism"/>
</dbReference>
<dbReference type="Reactome" id="R-HSA-390247">
    <property type="pathway name" value="Beta-oxidation of very long chain fatty acids"/>
</dbReference>
<dbReference type="Reactome" id="R-HSA-6798695">
    <property type="pathway name" value="Neutrophil degranulation"/>
</dbReference>
<dbReference type="Reactome" id="R-HSA-9033241">
    <property type="pathway name" value="Peroxisomal protein import"/>
</dbReference>
<dbReference type="Reactome" id="R-HSA-9033500">
    <property type="pathway name" value="TYSND1 cleaves peroxisomal proteins"/>
</dbReference>
<dbReference type="SignaLink" id="P09110"/>
<dbReference type="UniPathway" id="UPA00661"/>
<dbReference type="BioGRID-ORCS" id="30">
    <property type="hits" value="22 hits in 1173 CRISPR screens"/>
</dbReference>
<dbReference type="CD-CODE" id="91857CE7">
    <property type="entry name" value="Nucleolus"/>
</dbReference>
<dbReference type="CD-CODE" id="FB4E32DD">
    <property type="entry name" value="Presynaptic clusters and postsynaptic densities"/>
</dbReference>
<dbReference type="ChiTaRS" id="ACAA1">
    <property type="organism name" value="human"/>
</dbReference>
<dbReference type="EvolutionaryTrace" id="P09110"/>
<dbReference type="GeneWiki" id="ACAA1"/>
<dbReference type="GenomeRNAi" id="30"/>
<dbReference type="Pharos" id="P09110">
    <property type="development level" value="Tbio"/>
</dbReference>
<dbReference type="PRO" id="PR:P09110"/>
<dbReference type="Proteomes" id="UP000005640">
    <property type="component" value="Chromosome 3"/>
</dbReference>
<dbReference type="RNAct" id="P09110">
    <property type="molecule type" value="protein"/>
</dbReference>
<dbReference type="Bgee" id="ENSG00000060971">
    <property type="expression patterns" value="Expressed in jejunal mucosa and 206 other cell types or tissues"/>
</dbReference>
<dbReference type="ExpressionAtlas" id="P09110">
    <property type="expression patterns" value="baseline and differential"/>
</dbReference>
<dbReference type="GO" id="GO:0005829">
    <property type="term" value="C:cytosol"/>
    <property type="evidence" value="ECO:0000304"/>
    <property type="project" value="Reactome"/>
</dbReference>
<dbReference type="GO" id="GO:0005576">
    <property type="term" value="C:extracellular region"/>
    <property type="evidence" value="ECO:0000304"/>
    <property type="project" value="Reactome"/>
</dbReference>
<dbReference type="GO" id="GO:0016020">
    <property type="term" value="C:membrane"/>
    <property type="evidence" value="ECO:0007005"/>
    <property type="project" value="UniProtKB"/>
</dbReference>
<dbReference type="GO" id="GO:0005782">
    <property type="term" value="C:peroxisomal matrix"/>
    <property type="evidence" value="ECO:0000304"/>
    <property type="project" value="Reactome"/>
</dbReference>
<dbReference type="GO" id="GO:0005777">
    <property type="term" value="C:peroxisome"/>
    <property type="evidence" value="ECO:0000314"/>
    <property type="project" value="HPA"/>
</dbReference>
<dbReference type="GO" id="GO:0035580">
    <property type="term" value="C:specific granule lumen"/>
    <property type="evidence" value="ECO:0000304"/>
    <property type="project" value="Reactome"/>
</dbReference>
<dbReference type="GO" id="GO:0008775">
    <property type="term" value="F:acetate CoA-transferase activity"/>
    <property type="evidence" value="ECO:0000269"/>
    <property type="project" value="Reactome"/>
</dbReference>
<dbReference type="GO" id="GO:0003985">
    <property type="term" value="F:acetyl-CoA C-acetyltransferase activity"/>
    <property type="evidence" value="ECO:0007669"/>
    <property type="project" value="UniProtKB-EC"/>
</dbReference>
<dbReference type="GO" id="GO:0003988">
    <property type="term" value="F:acetyl-CoA C-acyltransferase activity"/>
    <property type="evidence" value="ECO:0000250"/>
    <property type="project" value="UniProtKB"/>
</dbReference>
<dbReference type="GO" id="GO:0050633">
    <property type="term" value="F:acetyl-CoA C-myristoyltransferase activity"/>
    <property type="evidence" value="ECO:0000250"/>
    <property type="project" value="UniProtKB"/>
</dbReference>
<dbReference type="GO" id="GO:0016401">
    <property type="term" value="F:palmitoyl-CoA oxidase activity"/>
    <property type="evidence" value="ECO:0000315"/>
    <property type="project" value="UniProtKB"/>
</dbReference>
<dbReference type="GO" id="GO:0036109">
    <property type="term" value="P:alpha-linolenic acid metabolic process"/>
    <property type="evidence" value="ECO:0000304"/>
    <property type="project" value="Reactome"/>
</dbReference>
<dbReference type="GO" id="GO:0008206">
    <property type="term" value="P:bile acid metabolic process"/>
    <property type="evidence" value="ECO:0000315"/>
    <property type="project" value="UniProtKB"/>
</dbReference>
<dbReference type="GO" id="GO:0006635">
    <property type="term" value="P:fatty acid beta-oxidation"/>
    <property type="evidence" value="ECO:0000315"/>
    <property type="project" value="UniProtKB"/>
</dbReference>
<dbReference type="GO" id="GO:0033540">
    <property type="term" value="P:fatty acid beta-oxidation using acyl-CoA oxidase"/>
    <property type="evidence" value="ECO:0000304"/>
    <property type="project" value="Reactome"/>
</dbReference>
<dbReference type="GO" id="GO:0010124">
    <property type="term" value="P:phenylacetate catabolic process"/>
    <property type="evidence" value="ECO:0000318"/>
    <property type="project" value="GO_Central"/>
</dbReference>
<dbReference type="GO" id="GO:0000038">
    <property type="term" value="P:very long-chain fatty acid metabolic process"/>
    <property type="evidence" value="ECO:0000315"/>
    <property type="project" value="UniProtKB"/>
</dbReference>
<dbReference type="CDD" id="cd00751">
    <property type="entry name" value="thiolase"/>
    <property type="match status" value="1"/>
</dbReference>
<dbReference type="FunFam" id="3.40.47.10:FF:000035">
    <property type="entry name" value="3-ketoacyl-CoA thiolase A, peroxisomal"/>
    <property type="match status" value="1"/>
</dbReference>
<dbReference type="Gene3D" id="3.40.47.10">
    <property type="match status" value="1"/>
</dbReference>
<dbReference type="InterPro" id="IPR002155">
    <property type="entry name" value="Thiolase"/>
</dbReference>
<dbReference type="InterPro" id="IPR016039">
    <property type="entry name" value="Thiolase-like"/>
</dbReference>
<dbReference type="InterPro" id="IPR050215">
    <property type="entry name" value="Thiolase-like_sf_Thiolase"/>
</dbReference>
<dbReference type="InterPro" id="IPR020615">
    <property type="entry name" value="Thiolase_acyl_enz_int_AS"/>
</dbReference>
<dbReference type="InterPro" id="IPR020610">
    <property type="entry name" value="Thiolase_AS"/>
</dbReference>
<dbReference type="InterPro" id="IPR020617">
    <property type="entry name" value="Thiolase_C"/>
</dbReference>
<dbReference type="InterPro" id="IPR020613">
    <property type="entry name" value="Thiolase_CS"/>
</dbReference>
<dbReference type="InterPro" id="IPR020616">
    <property type="entry name" value="Thiolase_N"/>
</dbReference>
<dbReference type="NCBIfam" id="TIGR01930">
    <property type="entry name" value="AcCoA-C-Actrans"/>
    <property type="match status" value="1"/>
</dbReference>
<dbReference type="PANTHER" id="PTHR43853">
    <property type="entry name" value="3-KETOACYL-COA THIOLASE, PEROXISOMAL"/>
    <property type="match status" value="1"/>
</dbReference>
<dbReference type="PANTHER" id="PTHR43853:SF8">
    <property type="entry name" value="3-KETOACYL-COA THIOLASE, PEROXISOMAL"/>
    <property type="match status" value="1"/>
</dbReference>
<dbReference type="Pfam" id="PF02803">
    <property type="entry name" value="Thiolase_C"/>
    <property type="match status" value="1"/>
</dbReference>
<dbReference type="Pfam" id="PF00108">
    <property type="entry name" value="Thiolase_N"/>
    <property type="match status" value="1"/>
</dbReference>
<dbReference type="PIRSF" id="PIRSF000429">
    <property type="entry name" value="Ac-CoA_Ac_transf"/>
    <property type="match status" value="1"/>
</dbReference>
<dbReference type="SUPFAM" id="SSF53901">
    <property type="entry name" value="Thiolase-like"/>
    <property type="match status" value="2"/>
</dbReference>
<dbReference type="PROSITE" id="PS00098">
    <property type="entry name" value="THIOLASE_1"/>
    <property type="match status" value="1"/>
</dbReference>
<dbReference type="PROSITE" id="PS00737">
    <property type="entry name" value="THIOLASE_2"/>
    <property type="match status" value="1"/>
</dbReference>
<dbReference type="PROSITE" id="PS00099">
    <property type="entry name" value="THIOLASE_3"/>
    <property type="match status" value="1"/>
</dbReference>
<proteinExistence type="evidence at protein level"/>
<feature type="transit peptide" description="Peroxisome" evidence="17">
    <location>
        <begin position="1"/>
        <end position="26"/>
    </location>
</feature>
<feature type="chain" id="PRO_0000034067" description="3-ketoacyl-CoA thiolase, peroxisomal">
    <location>
        <begin position="27"/>
        <end position="424"/>
    </location>
</feature>
<feature type="region of interest" description="PTS2-type peroxisomal targeting signal" evidence="5 6">
    <location>
        <begin position="1"/>
        <end position="26"/>
    </location>
</feature>
<feature type="active site" description="Acyl-thioester intermediate" evidence="1">
    <location>
        <position position="123"/>
    </location>
</feature>
<feature type="active site" description="Proton acceptor" evidence="3">
    <location>
        <position position="377"/>
    </location>
</feature>
<feature type="active site" description="Proton acceptor" evidence="3">
    <location>
        <position position="408"/>
    </location>
</feature>
<feature type="modified residue" description="Phosphothreonine" evidence="16">
    <location>
        <position position="59"/>
    </location>
</feature>
<feature type="modified residue" description="Phosphothreonine" evidence="16">
    <location>
        <position position="60"/>
    </location>
</feature>
<feature type="splice variant" id="VSP_046195" description="In isoform 2." evidence="8">
    <location>
        <begin position="149"/>
        <end position="181"/>
    </location>
</feature>
<feature type="splice variant" id="VSP_046196" description="In isoform 2." evidence="8">
    <location>
        <begin position="272"/>
        <end position="331"/>
    </location>
</feature>
<feature type="sequence variant" id="VAR_011904" description="In dbSNP:rs156265.">
    <original>E</original>
    <variation>D</variation>
    <location>
        <position position="172"/>
    </location>
</feature>
<feature type="sequence variant" id="VAR_069148" description="In dbSNP:rs2229528." evidence="4">
    <original>V</original>
    <variation>A</variation>
    <location>
        <position position="387"/>
    </location>
</feature>
<feature type="mutagenesis site" description="Does not affect localization to peroxisomes." evidence="5">
    <original>Q</original>
    <variation>D</variation>
    <variation>K</variation>
    <variation>L</variation>
    <location>
        <position position="5"/>
    </location>
</feature>
<feature type="mutagenesis site" description="Abolished localization to peroxisomes." evidence="5">
    <original>V</original>
    <variation>D</variation>
    <location>
        <position position="6"/>
    </location>
</feature>
<feature type="mutagenesis site" description="Does not affect localization to peroxisomes." evidence="5">
    <original>V</original>
    <variation>K</variation>
    <location>
        <position position="6"/>
    </location>
</feature>
<feature type="mutagenesis site" description="Abolished localization to peroxisomes." evidence="5">
    <original>V</original>
    <variation>D</variation>
    <variation>K</variation>
    <location>
        <position position="7"/>
    </location>
</feature>
<feature type="mutagenesis site" description="Does not affect localization to peroxisomes." evidence="5">
    <original>L</original>
    <variation>D</variation>
    <variation>K</variation>
    <location>
        <position position="8"/>
    </location>
</feature>
<feature type="mutagenesis site" description="Does not affect localization to peroxisomes." evidence="5">
    <original>G</original>
    <variation>D</variation>
    <variation>R</variation>
    <variation>L</variation>
    <location>
        <position position="9"/>
    </location>
</feature>
<feature type="mutagenesis site" description="In S3E mutant; Abolished localization to peroxisomes." evidence="5">
    <original>H</original>
    <variation>E</variation>
    <location>
        <position position="10"/>
    </location>
</feature>
<feature type="strand" evidence="18">
    <location>
        <begin position="38"/>
        <end position="45"/>
    </location>
</feature>
<feature type="turn" evidence="18">
    <location>
        <begin position="51"/>
        <end position="53"/>
    </location>
</feature>
<feature type="turn" evidence="18">
    <location>
        <begin position="55"/>
        <end position="58"/>
    </location>
</feature>
<feature type="helix" evidence="18">
    <location>
        <begin position="61"/>
        <end position="76"/>
    </location>
</feature>
<feature type="helix" evidence="18">
    <location>
        <begin position="80"/>
        <end position="82"/>
    </location>
</feature>
<feature type="strand" evidence="18">
    <location>
        <begin position="86"/>
        <end position="89"/>
    </location>
</feature>
<feature type="strand" evidence="18">
    <location>
        <begin position="91"/>
        <end position="94"/>
    </location>
</feature>
<feature type="helix" evidence="18">
    <location>
        <begin position="95"/>
        <end position="97"/>
    </location>
</feature>
<feature type="helix" evidence="18">
    <location>
        <begin position="98"/>
        <end position="107"/>
    </location>
</feature>
<feature type="strand" evidence="18">
    <location>
        <begin position="116"/>
        <end position="120"/>
    </location>
</feature>
<feature type="helix" evidence="18">
    <location>
        <begin position="122"/>
        <end position="124"/>
    </location>
</feature>
<feature type="helix" evidence="18">
    <location>
        <begin position="125"/>
        <end position="138"/>
    </location>
</feature>
<feature type="strand" evidence="18">
    <location>
        <begin position="143"/>
        <end position="152"/>
    </location>
</feature>
<feature type="turn" evidence="18">
    <location>
        <begin position="153"/>
        <end position="155"/>
    </location>
</feature>
<feature type="helix" evidence="18">
    <location>
        <begin position="168"/>
        <end position="170"/>
    </location>
</feature>
<feature type="helix" evidence="18">
    <location>
        <begin position="172"/>
        <end position="175"/>
    </location>
</feature>
<feature type="helix" evidence="18">
    <location>
        <begin position="176"/>
        <end position="178"/>
    </location>
</feature>
<feature type="helix" evidence="18">
    <location>
        <begin position="181"/>
        <end position="191"/>
    </location>
</feature>
<feature type="helix" evidence="18">
    <location>
        <begin position="196"/>
        <end position="216"/>
    </location>
</feature>
<feature type="turn" evidence="18">
    <location>
        <begin position="217"/>
        <end position="222"/>
    </location>
</feature>
<feature type="strand" evidence="18">
    <location>
        <begin position="226"/>
        <end position="231"/>
    </location>
</feature>
<feature type="strand" evidence="18">
    <location>
        <begin position="237"/>
        <end position="242"/>
    </location>
</feature>
<feature type="helix" evidence="18">
    <location>
        <begin position="254"/>
        <end position="259"/>
    </location>
</feature>
<feature type="strand" evidence="18">
    <location>
        <begin position="263"/>
        <end position="265"/>
    </location>
</feature>
<feature type="strand" evidence="18">
    <location>
        <begin position="279"/>
        <end position="289"/>
    </location>
</feature>
<feature type="helix" evidence="18">
    <location>
        <begin position="290"/>
        <end position="296"/>
    </location>
</feature>
<feature type="strand" evidence="18">
    <location>
        <begin position="302"/>
        <end position="311"/>
    </location>
</feature>
<feature type="helix" evidence="18">
    <location>
        <begin position="314"/>
        <end position="319"/>
    </location>
</feature>
<feature type="helix" evidence="18">
    <location>
        <begin position="320"/>
        <end position="332"/>
    </location>
</feature>
<feature type="helix" evidence="18">
    <location>
        <begin position="336"/>
        <end position="338"/>
    </location>
</feature>
<feature type="strand" evidence="18">
    <location>
        <begin position="339"/>
        <end position="344"/>
    </location>
</feature>
<feature type="helix" evidence="18">
    <location>
        <begin position="349"/>
        <end position="359"/>
    </location>
</feature>
<feature type="helix" evidence="18">
    <location>
        <begin position="363"/>
        <end position="365"/>
    </location>
</feature>
<feature type="helix" evidence="18">
    <location>
        <begin position="372"/>
        <end position="375"/>
    </location>
</feature>
<feature type="turn" evidence="18">
    <location>
        <begin position="379"/>
        <end position="381"/>
    </location>
</feature>
<feature type="helix" evidence="18">
    <location>
        <begin position="382"/>
        <end position="397"/>
    </location>
</feature>
<feature type="strand" evidence="18">
    <location>
        <begin position="401"/>
        <end position="409"/>
    </location>
</feature>
<feature type="turn" evidence="18">
    <location>
        <begin position="410"/>
        <end position="412"/>
    </location>
</feature>
<feature type="strand" evidence="18">
    <location>
        <begin position="413"/>
        <end position="421"/>
    </location>
</feature>
<organism>
    <name type="scientific">Homo sapiens</name>
    <name type="common">Human</name>
    <dbReference type="NCBI Taxonomy" id="9606"/>
    <lineage>
        <taxon>Eukaryota</taxon>
        <taxon>Metazoa</taxon>
        <taxon>Chordata</taxon>
        <taxon>Craniata</taxon>
        <taxon>Vertebrata</taxon>
        <taxon>Euteleostomi</taxon>
        <taxon>Mammalia</taxon>
        <taxon>Eutheria</taxon>
        <taxon>Euarchontoglires</taxon>
        <taxon>Primates</taxon>
        <taxon>Haplorrhini</taxon>
        <taxon>Catarrhini</taxon>
        <taxon>Hominidae</taxon>
        <taxon>Homo</taxon>
    </lineage>
</organism>
<protein>
    <recommendedName>
        <fullName evidence="10">3-ketoacyl-CoA thiolase, peroxisomal</fullName>
        <ecNumber evidence="14">2.3.1.16</ecNumber>
    </recommendedName>
    <alternativeName>
        <fullName>Acetyl-CoA C-myristoyltransferase</fullName>
        <ecNumber evidence="14">2.3.1.155</ecNumber>
    </alternativeName>
    <alternativeName>
        <fullName>Acetyl-CoA acyltransferase</fullName>
        <ecNumber evidence="2">2.3.1.9</ecNumber>
    </alternativeName>
    <alternativeName>
        <fullName>Beta-ketothiolase</fullName>
    </alternativeName>
    <alternativeName>
        <fullName evidence="9">Peroxisomal 3-oxoacyl-CoA thiolase</fullName>
    </alternativeName>
</protein>
<sequence>MQRLQVVLGHLRGPADSGWMPQAAPCLSGAPQASAADVVVVHGRRTAICRAGRGGFKDTTPDELLSAVMTAVLKDVNLRPEQLGDICVGNVLQPGAGAIMARIAQFLSDIPETVPLSTVNRQCSSGLQAVASIAGGIRNGSYDIGMACGVESMSLADRGNPGNITSRLMEKEKARDCLIPMGITSENVAERFGISREKQDTFALASQQKAARAQSKGCFQAEIVPVTTTVHDDKGTKRSITVTQDEGIRPSTTMEGLAKLKPAFKKDGSTTAGNSSQVSDGAAAILLARRSKAEELGLPILGVLRSYAVVGVPPDIMGIGPAYAIPVALQKAGLTVSDVDIFEINEAFASQAAYCVEKLRLPPEKVNPLGGAVALGHPLGCTGARQVITLLNELKRRGKRAYGVVSMCIGTGMGAAAVFEYPGN</sequence>
<name>THIK_HUMAN</name>
<evidence type="ECO:0000250" key="1"/>
<evidence type="ECO:0000250" key="2">
    <source>
        <dbReference type="UniProtKB" id="P21775"/>
    </source>
</evidence>
<evidence type="ECO:0000255" key="3">
    <source>
        <dbReference type="PROSITE-ProRule" id="PRU10020"/>
    </source>
</evidence>
<evidence type="ECO:0000269" key="4">
    <source>
    </source>
</evidence>
<evidence type="ECO:0000269" key="5">
    <source>
    </source>
</evidence>
<evidence type="ECO:0000269" key="6">
    <source>
    </source>
</evidence>
<evidence type="ECO:0000269" key="7">
    <source ref="16"/>
</evidence>
<evidence type="ECO:0000303" key="8">
    <source>
    </source>
</evidence>
<evidence type="ECO:0000303" key="9">
    <source>
    </source>
</evidence>
<evidence type="ECO:0000305" key="10"/>
<evidence type="ECO:0000305" key="11">
    <source>
    </source>
</evidence>
<evidence type="ECO:0000305" key="12">
    <source>
    </source>
</evidence>
<evidence type="ECO:0000305" key="13">
    <source>
    </source>
</evidence>
<evidence type="ECO:0000305" key="14">
    <source>
    </source>
</evidence>
<evidence type="ECO:0000312" key="15">
    <source>
        <dbReference type="HGNC" id="HGNC:82"/>
    </source>
</evidence>
<evidence type="ECO:0007744" key="16">
    <source>
    </source>
</evidence>
<evidence type="ECO:0007744" key="17">
    <source>
    </source>
</evidence>
<evidence type="ECO:0007829" key="18">
    <source>
        <dbReference type="PDB" id="2IIK"/>
    </source>
</evidence>
<keyword id="KW-0002">3D-structure</keyword>
<keyword id="KW-0012">Acyltransferase</keyword>
<keyword id="KW-0025">Alternative splicing</keyword>
<keyword id="KW-0276">Fatty acid metabolism</keyword>
<keyword id="KW-0443">Lipid metabolism</keyword>
<keyword id="KW-0576">Peroxisome</keyword>
<keyword id="KW-0597">Phosphoprotein</keyword>
<keyword id="KW-1267">Proteomics identification</keyword>
<keyword id="KW-1185">Reference proteome</keyword>
<keyword id="KW-0808">Transferase</keyword>
<keyword id="KW-0809">Transit peptide</keyword>
<comment type="function">
    <text evidence="11 14">Responsible for the thiolytic cleavage of straight chain 3-keto fatty acyl-CoAs (3-oxoacyl-CoAs) (PubMed:11734571, PubMed:2882519). Plays an important role in fatty acid peroxisomal beta-oxidation (PubMed:11734571, PubMed:2882519). Catalyzes the cleavage of short, medium, long, and very long straight chain 3-oxoacyl-CoAs (PubMed:11734571, PubMed:2882519).</text>
</comment>
<comment type="catalytic activity">
    <reaction evidence="11 14">
        <text>an acyl-CoA + acetyl-CoA = a 3-oxoacyl-CoA + CoA</text>
        <dbReference type="Rhea" id="RHEA:21564"/>
        <dbReference type="ChEBI" id="CHEBI:57287"/>
        <dbReference type="ChEBI" id="CHEBI:57288"/>
        <dbReference type="ChEBI" id="CHEBI:58342"/>
        <dbReference type="ChEBI" id="CHEBI:90726"/>
        <dbReference type="EC" id="2.3.1.16"/>
    </reaction>
    <physiologicalReaction direction="right-to-left" evidence="11 14">
        <dbReference type="Rhea" id="RHEA:21566"/>
    </physiologicalReaction>
</comment>
<comment type="catalytic activity">
    <reaction evidence="2">
        <text>2 acetyl-CoA = acetoacetyl-CoA + CoA</text>
        <dbReference type="Rhea" id="RHEA:21036"/>
        <dbReference type="ChEBI" id="CHEBI:57286"/>
        <dbReference type="ChEBI" id="CHEBI:57287"/>
        <dbReference type="ChEBI" id="CHEBI:57288"/>
        <dbReference type="EC" id="2.3.1.9"/>
    </reaction>
    <physiologicalReaction direction="right-to-left" evidence="2">
        <dbReference type="Rhea" id="RHEA:21038"/>
    </physiologicalReaction>
</comment>
<comment type="catalytic activity">
    <reaction evidence="14">
        <text>tetradecanoyl-CoA + acetyl-CoA = 3-oxohexadecanoyl-CoA + CoA</text>
        <dbReference type="Rhea" id="RHEA:18161"/>
        <dbReference type="ChEBI" id="CHEBI:57287"/>
        <dbReference type="ChEBI" id="CHEBI:57288"/>
        <dbReference type="ChEBI" id="CHEBI:57349"/>
        <dbReference type="ChEBI" id="CHEBI:57385"/>
        <dbReference type="EC" id="2.3.1.155"/>
    </reaction>
    <physiologicalReaction direction="right-to-left" evidence="14">
        <dbReference type="Rhea" id="RHEA:18163"/>
    </physiologicalReaction>
</comment>
<comment type="catalytic activity">
    <reaction evidence="2">
        <text>hexanoyl-CoA + acetyl-CoA = 3-oxooctanoyl-CoA + CoA</text>
        <dbReference type="Rhea" id="RHEA:31203"/>
        <dbReference type="ChEBI" id="CHEBI:57287"/>
        <dbReference type="ChEBI" id="CHEBI:57288"/>
        <dbReference type="ChEBI" id="CHEBI:62619"/>
        <dbReference type="ChEBI" id="CHEBI:62620"/>
    </reaction>
    <physiologicalReaction direction="right-to-left" evidence="2">
        <dbReference type="Rhea" id="RHEA:31205"/>
    </physiologicalReaction>
</comment>
<comment type="catalytic activity">
    <reaction evidence="2">
        <text>3-oxohexadecanedioyl-CoA + CoA = tetradecanedioyl-CoA + acetyl-CoA</text>
        <dbReference type="Rhea" id="RHEA:40343"/>
        <dbReference type="ChEBI" id="CHEBI:57287"/>
        <dbReference type="ChEBI" id="CHEBI:57288"/>
        <dbReference type="ChEBI" id="CHEBI:77081"/>
        <dbReference type="ChEBI" id="CHEBI:77084"/>
    </reaction>
    <physiologicalReaction direction="left-to-right" evidence="2">
        <dbReference type="Rhea" id="RHEA:40344"/>
    </physiologicalReaction>
</comment>
<comment type="catalytic activity">
    <reaction evidence="11">
        <text>3-oxo-(6Z,9Z,12Z,15Z,18Z,21Z)-tetracosahexaenoyl-CoA + CoA = (4Z,7Z,10Z,13Z,16Z,19Z)-docosahexaenoyl-CoA + acetyl-CoA</text>
        <dbReference type="Rhea" id="RHEA:39131"/>
        <dbReference type="ChEBI" id="CHEBI:57287"/>
        <dbReference type="ChEBI" id="CHEBI:57288"/>
        <dbReference type="ChEBI" id="CHEBI:74298"/>
        <dbReference type="ChEBI" id="CHEBI:74304"/>
    </reaction>
    <physiologicalReaction direction="left-to-right" evidence="11">
        <dbReference type="Rhea" id="RHEA:39132"/>
    </physiologicalReaction>
</comment>
<comment type="pathway">
    <text evidence="11 14">Lipid metabolism; peroxisomal fatty acid beta-oxidation.</text>
</comment>
<comment type="subunit">
    <text evidence="5 6 7">Homodimer (Ref.16). Interacts (via PTS2-type peroxisomal targeting signal region) with PEX7; leading to its translocation into peroxisomes (PubMed:22057399, PubMed:25538232).</text>
</comment>
<comment type="interaction">
    <interactant intactId="EBI-3926709">
        <id>P09110</id>
    </interactant>
    <interactant intactId="EBI-2515349">
        <id>Q9BSK4</id>
        <label>FEM1A</label>
    </interactant>
    <organismsDiffer>false</organismsDiffer>
    <experiments>3</experiments>
</comment>
<comment type="interaction">
    <interactant intactId="EBI-3926709">
        <id>P09110</id>
    </interactant>
    <interactant intactId="EBI-717422">
        <id>Q12800</id>
        <label>TFCP2</label>
    </interactant>
    <organismsDiffer>false</organismsDiffer>
    <experiments>3</experiments>
</comment>
<comment type="subcellular location">
    <subcellularLocation>
        <location evidence="5 6">Peroxisome</location>
    </subcellularLocation>
    <text evidence="5 6">Transported into peroxisomes following association with PEX7.</text>
</comment>
<comment type="alternative products">
    <event type="alternative splicing"/>
    <isoform>
        <id>P09110-1</id>
        <name>1</name>
        <sequence type="displayed"/>
    </isoform>
    <isoform>
        <id>P09110-2</id>
        <name>2</name>
        <sequence type="described" ref="VSP_046195 VSP_046196"/>
    </isoform>
</comment>
<comment type="induction">
    <text evidence="2">Peroxisomal thiolase is markedly induced (at the level of transcription) by various hypolipidemic compounds in parallel with the other two enzymes of the peroxisomal beta-oxidation system.</text>
</comment>
<comment type="domain">
    <text evidence="12 13">The PTS2-type peroxisomal targeting signal, which mediates interaction with PEX7 and localization to peroxisomes, is cleaved following import into peroxisomes.</text>
</comment>
<comment type="similarity">
    <text evidence="10">Belongs to the thiolase-like superfamily. Thiolase family.</text>
</comment>
<reference key="1">
    <citation type="journal article" date="1988" name="Nucleic Acids Res.">
        <title>Nucleotide sequence of human peroxisomal 3-oxoacyl-CoA thiolase.</title>
        <authorList>
            <person name="Bout A."/>
            <person name="Teunissen Y."/>
            <person name="Hashimoto T."/>
            <person name="Benne R."/>
            <person name="Tager J.M."/>
        </authorList>
    </citation>
    <scope>NUCLEOTIDE SEQUENCE [MRNA] (ISOFORM 1)</scope>
    <source>
        <tissue>Liver</tissue>
    </source>
</reference>
<reference key="2">
    <citation type="submission" date="1989-08" db="EMBL/GenBank/DDBJ databases">
        <authorList>
            <person name="Bout A."/>
        </authorList>
    </citation>
    <scope>SEQUENCE REVISION TO 285-287</scope>
</reference>
<reference key="3">
    <citation type="journal article" date="1989" name="Nucleic Acids Res.">
        <title>Complete cDNA sequence of human foetal liver peroxisomal 3-oxoacyl-CoA thiolase.</title>
        <authorList>
            <person name="Fairbairn L.J."/>
            <person name="Tanner M.J.A."/>
        </authorList>
    </citation>
    <scope>NUCLEOTIDE SEQUENCE [MRNA] (ISOFORM 1)</scope>
    <source>
        <tissue>Liver</tissue>
    </source>
</reference>
<reference key="4">
    <citation type="journal article" date="1991" name="Biochim. Biophys. Acta">
        <title>Characterization of the gene encoding human peroxisomal 3-oxoacyl-CoA thiolase (ACAA). No large DNA rearrangement in a thiolase-deficient patient.</title>
        <authorList>
            <person name="Bout A."/>
            <person name="Franse M.M."/>
            <person name="Collins J."/>
            <person name="Blonden L."/>
            <person name="Tager J.M."/>
            <person name="Benne R."/>
        </authorList>
    </citation>
    <scope>NUCLEOTIDE SEQUENCE [GENOMIC DNA]</scope>
</reference>
<reference key="5">
    <citation type="journal article" date="2006" name="Nature">
        <title>The DNA sequence, annotation and analysis of human chromosome 3.</title>
        <authorList>
            <person name="Muzny D.M."/>
            <person name="Scherer S.E."/>
            <person name="Kaul R."/>
            <person name="Wang J."/>
            <person name="Yu J."/>
            <person name="Sudbrak R."/>
            <person name="Buhay C.J."/>
            <person name="Chen R."/>
            <person name="Cree A."/>
            <person name="Ding Y."/>
            <person name="Dugan-Rocha S."/>
            <person name="Gill R."/>
            <person name="Gunaratne P."/>
            <person name="Harris R.A."/>
            <person name="Hawes A.C."/>
            <person name="Hernandez J."/>
            <person name="Hodgson A.V."/>
            <person name="Hume J."/>
            <person name="Jackson A."/>
            <person name="Khan Z.M."/>
            <person name="Kovar-Smith C."/>
            <person name="Lewis L.R."/>
            <person name="Lozado R.J."/>
            <person name="Metzker M.L."/>
            <person name="Milosavljevic A."/>
            <person name="Miner G.R."/>
            <person name="Morgan M.B."/>
            <person name="Nazareth L.V."/>
            <person name="Scott G."/>
            <person name="Sodergren E."/>
            <person name="Song X.-Z."/>
            <person name="Steffen D."/>
            <person name="Wei S."/>
            <person name="Wheeler D.A."/>
            <person name="Wright M.W."/>
            <person name="Worley K.C."/>
            <person name="Yuan Y."/>
            <person name="Zhang Z."/>
            <person name="Adams C.Q."/>
            <person name="Ansari-Lari M.A."/>
            <person name="Ayele M."/>
            <person name="Brown M.J."/>
            <person name="Chen G."/>
            <person name="Chen Z."/>
            <person name="Clendenning J."/>
            <person name="Clerc-Blankenburg K.P."/>
            <person name="Chen R."/>
            <person name="Chen Z."/>
            <person name="Davis C."/>
            <person name="Delgado O."/>
            <person name="Dinh H.H."/>
            <person name="Dong W."/>
            <person name="Draper H."/>
            <person name="Ernst S."/>
            <person name="Fu G."/>
            <person name="Gonzalez-Garay M.L."/>
            <person name="Garcia D.K."/>
            <person name="Gillett W."/>
            <person name="Gu J."/>
            <person name="Hao B."/>
            <person name="Haugen E."/>
            <person name="Havlak P."/>
            <person name="He X."/>
            <person name="Hennig S."/>
            <person name="Hu S."/>
            <person name="Huang W."/>
            <person name="Jackson L.R."/>
            <person name="Jacob L.S."/>
            <person name="Kelly S.H."/>
            <person name="Kube M."/>
            <person name="Levy R."/>
            <person name="Li Z."/>
            <person name="Liu B."/>
            <person name="Liu J."/>
            <person name="Liu W."/>
            <person name="Lu J."/>
            <person name="Maheshwari M."/>
            <person name="Nguyen B.-V."/>
            <person name="Okwuonu G.O."/>
            <person name="Palmeiri A."/>
            <person name="Pasternak S."/>
            <person name="Perez L.M."/>
            <person name="Phelps K.A."/>
            <person name="Plopper F.J."/>
            <person name="Qiang B."/>
            <person name="Raymond C."/>
            <person name="Rodriguez R."/>
            <person name="Saenphimmachak C."/>
            <person name="Santibanez J."/>
            <person name="Shen H."/>
            <person name="Shen Y."/>
            <person name="Subramanian S."/>
            <person name="Tabor P.E."/>
            <person name="Verduzco D."/>
            <person name="Waldron L."/>
            <person name="Wang J."/>
            <person name="Wang J."/>
            <person name="Wang Q."/>
            <person name="Williams G.A."/>
            <person name="Wong G.K.-S."/>
            <person name="Yao Z."/>
            <person name="Zhang J."/>
            <person name="Zhang X."/>
            <person name="Zhao G."/>
            <person name="Zhou J."/>
            <person name="Zhou Y."/>
            <person name="Nelson D."/>
            <person name="Lehrach H."/>
            <person name="Reinhardt R."/>
            <person name="Naylor S.L."/>
            <person name="Yang H."/>
            <person name="Olson M."/>
            <person name="Weinstock G."/>
            <person name="Gibbs R.A."/>
        </authorList>
    </citation>
    <scope>NUCLEOTIDE SEQUENCE [LARGE SCALE GENOMIC DNA]</scope>
</reference>
<reference key="6">
    <citation type="submission" date="2005-07" db="EMBL/GenBank/DDBJ databases">
        <authorList>
            <person name="Mural R.J."/>
            <person name="Istrail S."/>
            <person name="Sutton G."/>
            <person name="Florea L."/>
            <person name="Halpern A.L."/>
            <person name="Mobarry C.M."/>
            <person name="Lippert R."/>
            <person name="Walenz B."/>
            <person name="Shatkay H."/>
            <person name="Dew I."/>
            <person name="Miller J.R."/>
            <person name="Flanigan M.J."/>
            <person name="Edwards N.J."/>
            <person name="Bolanos R."/>
            <person name="Fasulo D."/>
            <person name="Halldorsson B.V."/>
            <person name="Hannenhalli S."/>
            <person name="Turner R."/>
            <person name="Yooseph S."/>
            <person name="Lu F."/>
            <person name="Nusskern D.R."/>
            <person name="Shue B.C."/>
            <person name="Zheng X.H."/>
            <person name="Zhong F."/>
            <person name="Delcher A.L."/>
            <person name="Huson D.H."/>
            <person name="Kravitz S.A."/>
            <person name="Mouchard L."/>
            <person name="Reinert K."/>
            <person name="Remington K.A."/>
            <person name="Clark A.G."/>
            <person name="Waterman M.S."/>
            <person name="Eichler E.E."/>
            <person name="Adams M.D."/>
            <person name="Hunkapiller M.W."/>
            <person name="Myers E.W."/>
            <person name="Venter J.C."/>
        </authorList>
    </citation>
    <scope>NUCLEOTIDE SEQUENCE [LARGE SCALE GENOMIC DNA]</scope>
</reference>
<reference key="7">
    <citation type="journal article" date="2004" name="Genome Res.">
        <title>The status, quality, and expansion of the NIH full-length cDNA project: the Mammalian Gene Collection (MGC).</title>
        <authorList>
            <consortium name="The MGC Project Team"/>
        </authorList>
    </citation>
    <scope>NUCLEOTIDE SEQUENCE [LARGE SCALE MRNA] (ISOFORMS 1 AND 2)</scope>
    <scope>VARIANT ALA-387</scope>
    <source>
        <tissue>Lymph</tissue>
        <tissue>Ovary</tissue>
        <tissue>Pancreas</tissue>
    </source>
</reference>
<reference key="8">
    <citation type="journal article" date="1987" name="Proc. Natl. Acad. Sci. U.S.A.">
        <title>Human peroxisomal 3-oxoacyl-coenzyme A thiolase deficiency.</title>
        <authorList>
            <person name="Schram A.W."/>
            <person name="Goldfischer S."/>
            <person name="van Roermund C.W."/>
            <person name="Brouwer-Kelder E.M."/>
            <person name="Collins J."/>
            <person name="Hashimoto T."/>
            <person name="Heymans H.S."/>
            <person name="van den Bosch H."/>
            <person name="Schutgens R.B."/>
            <person name="Tager J.M."/>
        </authorList>
    </citation>
    <scope>FUNCTION</scope>
    <scope>CATALYTIC ACTIVITY</scope>
    <scope>PATHWAY</scope>
</reference>
<reference key="9">
    <citation type="journal article" date="2001" name="J. Lipid Res.">
        <title>Identification of the peroxisomal beta-oxidation enzymes involved in the biosynthesis of docosahexaenoic acid.</title>
        <authorList>
            <person name="Ferdinandusse S."/>
            <person name="Denis S."/>
            <person name="Mooijer P.A."/>
            <person name="Zhang Z."/>
            <person name="Reddy J.K."/>
            <person name="Spector A.A."/>
            <person name="Wanders R.J."/>
        </authorList>
    </citation>
    <scope>FUNCTION</scope>
    <scope>CATALYTIC ACTIVITY</scope>
    <scope>PATHWAY</scope>
</reference>
<reference key="10">
    <citation type="journal article" date="2009" name="Sci. Signal.">
        <title>Quantitative phosphoproteomic analysis of T cell receptor signaling reveals system-wide modulation of protein-protein interactions.</title>
        <authorList>
            <person name="Mayya V."/>
            <person name="Lundgren D.H."/>
            <person name="Hwang S.-I."/>
            <person name="Rezaul K."/>
            <person name="Wu L."/>
            <person name="Eng J.K."/>
            <person name="Rodionov V."/>
            <person name="Han D.K."/>
        </authorList>
    </citation>
    <scope>PHOSPHORYLATION [LARGE SCALE ANALYSIS] AT THR-59 AND THR-60</scope>
    <scope>IDENTIFICATION BY MASS SPECTROMETRY [LARGE SCALE ANALYSIS]</scope>
    <source>
        <tissue>Leukemic T-cell</tissue>
    </source>
</reference>
<reference key="11">
    <citation type="journal article" date="2011" name="BMC Syst. Biol.">
        <title>Initial characterization of the human central proteome.</title>
        <authorList>
            <person name="Burkard T.R."/>
            <person name="Planyavsky M."/>
            <person name="Kaupe I."/>
            <person name="Breitwieser F.P."/>
            <person name="Buerckstuemmer T."/>
            <person name="Bennett K.L."/>
            <person name="Superti-Furga G."/>
            <person name="Colinge J."/>
        </authorList>
    </citation>
    <scope>IDENTIFICATION BY MASS SPECTROMETRY [LARGE SCALE ANALYSIS]</scope>
</reference>
<reference key="12">
    <citation type="journal article" date="2011" name="J. Biol. Chem.">
        <title>Structural requirements for interaction of peroxisomal targeting signal 2 and its receptor PEX7.</title>
        <authorList>
            <person name="Kunze M."/>
            <person name="Neuberger G."/>
            <person name="Maurer-Stroh S."/>
            <person name="Ma J."/>
            <person name="Eck T."/>
            <person name="Braverman N."/>
            <person name="Schmid J.A."/>
            <person name="Eisenhaber F."/>
            <person name="Berger J."/>
        </authorList>
    </citation>
    <scope>SUBCELLULAR LOCATION</scope>
    <scope>INTERACTION WITH PEX7</scope>
    <scope>MUTAGENESIS OF GLN-5; VAL-6; VAL-7; LEU-8; GLY-9 AND HIS-10</scope>
</reference>
<reference key="13">
    <citation type="journal article" date="2014" name="J. Proteomics">
        <title>An enzyme assisted RP-RPLC approach for in-depth analysis of human liver phosphoproteome.</title>
        <authorList>
            <person name="Bian Y."/>
            <person name="Song C."/>
            <person name="Cheng K."/>
            <person name="Dong M."/>
            <person name="Wang F."/>
            <person name="Huang J."/>
            <person name="Sun D."/>
            <person name="Wang L."/>
            <person name="Ye M."/>
            <person name="Zou H."/>
        </authorList>
    </citation>
    <scope>IDENTIFICATION BY MASS SPECTROMETRY [LARGE SCALE ANALYSIS]</scope>
    <source>
        <tissue>Liver</tissue>
    </source>
</reference>
<reference key="14">
    <citation type="journal article" date="2015" name="Proteomics">
        <title>N-terminome analysis of the human mitochondrial proteome.</title>
        <authorList>
            <person name="Vaca Jacome A.S."/>
            <person name="Rabilloud T."/>
            <person name="Schaeffer-Reiss C."/>
            <person name="Rompais M."/>
            <person name="Ayoub D."/>
            <person name="Lane L."/>
            <person name="Bairoch A."/>
            <person name="Van Dorsselaer A."/>
            <person name="Carapito C."/>
        </authorList>
    </citation>
    <scope>CLEAVAGE OF TRANSIT PEPTIDE [LARGE SCALE ANALYSIS] AFTER CYS-26</scope>
    <scope>IDENTIFICATION BY MASS SPECTROMETRY [LARGE SCALE ANALYSIS]</scope>
</reference>
<reference key="15">
    <citation type="journal article" date="2015" name="J. Biol. Chem.">
        <title>Mechanistic insights into PTS2-mediated peroxisomal protein import: the co-receptor PEX5L drastically increases the interaction strength between the cargo protein and the receptor PEX7.</title>
        <authorList>
            <person name="Kunze M."/>
            <person name="Malkani N."/>
            <person name="Maurer-Stroh S."/>
            <person name="Wiesinger C."/>
            <person name="Schmid J.A."/>
            <person name="Berger J."/>
        </authorList>
    </citation>
    <scope>SUBCELLULAR LOCATION</scope>
    <scope>DOMAIN</scope>
    <scope>INTERACTION WITH PEX7</scope>
</reference>
<reference key="16">
    <citation type="submission" date="2006-10" db="PDB data bank">
        <title>Crystal structure of human peroxisomal acetyl-COA acyl transferase 1 (ACAA1).</title>
        <authorList>
            <consortium name="Structural genomics consortium (SGC)"/>
        </authorList>
    </citation>
    <scope>X-RAY CRYSTALLOGRAPHY (2.55 ANGSTROMS) OF 28-424</scope>
    <scope>SUBUNIT</scope>
</reference>
<accession>P09110</accession>
<accession>G5E935</accession>
<accession>Q96CA6</accession>